<feature type="chain" id="PRO_0000127034" description="Large ribosomal subunit protein eL39z/eL39x">
    <location>
        <begin position="1"/>
        <end position="51"/>
    </location>
</feature>
<feature type="region of interest" description="Disordered" evidence="1">
    <location>
        <begin position="1"/>
        <end position="21"/>
    </location>
</feature>
<feature type="compositionally biased region" description="Basic residues" evidence="1">
    <location>
        <begin position="7"/>
        <end position="19"/>
    </location>
</feature>
<organism>
    <name type="scientific">Arabidopsis thaliana</name>
    <name type="common">Mouse-ear cress</name>
    <dbReference type="NCBI Taxonomy" id="3702"/>
    <lineage>
        <taxon>Eukaryota</taxon>
        <taxon>Viridiplantae</taxon>
        <taxon>Streptophyta</taxon>
        <taxon>Embryophyta</taxon>
        <taxon>Tracheophyta</taxon>
        <taxon>Spermatophyta</taxon>
        <taxon>Magnoliopsida</taxon>
        <taxon>eudicotyledons</taxon>
        <taxon>Gunneridae</taxon>
        <taxon>Pentapetalae</taxon>
        <taxon>rosids</taxon>
        <taxon>malvids</taxon>
        <taxon>Brassicales</taxon>
        <taxon>Brassicaceae</taxon>
        <taxon>Camelineae</taxon>
        <taxon>Arabidopsis</taxon>
    </lineage>
</organism>
<reference key="1">
    <citation type="journal article" date="1999" name="Nature">
        <title>Sequence and analysis of chromosome 2 of the plant Arabidopsis thaliana.</title>
        <authorList>
            <person name="Lin X."/>
            <person name="Kaul S."/>
            <person name="Rounsley S.D."/>
            <person name="Shea T.P."/>
            <person name="Benito M.-I."/>
            <person name="Town C.D."/>
            <person name="Fujii C.Y."/>
            <person name="Mason T.M."/>
            <person name="Bowman C.L."/>
            <person name="Barnstead M.E."/>
            <person name="Feldblyum T.V."/>
            <person name="Buell C.R."/>
            <person name="Ketchum K.A."/>
            <person name="Lee J.J."/>
            <person name="Ronning C.M."/>
            <person name="Koo H.L."/>
            <person name="Moffat K.S."/>
            <person name="Cronin L.A."/>
            <person name="Shen M."/>
            <person name="Pai G."/>
            <person name="Van Aken S."/>
            <person name="Umayam L."/>
            <person name="Tallon L.J."/>
            <person name="Gill J.E."/>
            <person name="Adams M.D."/>
            <person name="Carrera A.J."/>
            <person name="Creasy T.H."/>
            <person name="Goodman H.M."/>
            <person name="Somerville C.R."/>
            <person name="Copenhaver G.P."/>
            <person name="Preuss D."/>
            <person name="Nierman W.C."/>
            <person name="White O."/>
            <person name="Eisen J.A."/>
            <person name="Salzberg S.L."/>
            <person name="Fraser C.M."/>
            <person name="Venter J.C."/>
        </authorList>
    </citation>
    <scope>NUCLEOTIDE SEQUENCE [LARGE SCALE GENOMIC DNA] (AT2G25210)</scope>
    <source>
        <strain>cv. Columbia</strain>
    </source>
</reference>
<reference key="2">
    <citation type="journal article" date="1999" name="Nature">
        <title>Sequence and analysis of chromosome 4 of the plant Arabidopsis thaliana.</title>
        <authorList>
            <person name="Mayer K.F.X."/>
            <person name="Schueller C."/>
            <person name="Wambutt R."/>
            <person name="Murphy G."/>
            <person name="Volckaert G."/>
            <person name="Pohl T."/>
            <person name="Duesterhoeft A."/>
            <person name="Stiekema W."/>
            <person name="Entian K.-D."/>
            <person name="Terryn N."/>
            <person name="Harris B."/>
            <person name="Ansorge W."/>
            <person name="Brandt P."/>
            <person name="Grivell L.A."/>
            <person name="Rieger M."/>
            <person name="Weichselgartner M."/>
            <person name="de Simone V."/>
            <person name="Obermaier B."/>
            <person name="Mache R."/>
            <person name="Mueller M."/>
            <person name="Kreis M."/>
            <person name="Delseny M."/>
            <person name="Puigdomenech P."/>
            <person name="Watson M."/>
            <person name="Schmidtheini T."/>
            <person name="Reichert B."/>
            <person name="Portetelle D."/>
            <person name="Perez-Alonso M."/>
            <person name="Boutry M."/>
            <person name="Bancroft I."/>
            <person name="Vos P."/>
            <person name="Hoheisel J."/>
            <person name="Zimmermann W."/>
            <person name="Wedler H."/>
            <person name="Ridley P."/>
            <person name="Langham S.-A."/>
            <person name="McCullagh B."/>
            <person name="Bilham L."/>
            <person name="Robben J."/>
            <person name="van der Schueren J."/>
            <person name="Grymonprez B."/>
            <person name="Chuang Y.-J."/>
            <person name="Vandenbussche F."/>
            <person name="Braeken M."/>
            <person name="Weltjens I."/>
            <person name="Voet M."/>
            <person name="Bastiaens I."/>
            <person name="Aert R."/>
            <person name="Defoor E."/>
            <person name="Weitzenegger T."/>
            <person name="Bothe G."/>
            <person name="Ramsperger U."/>
            <person name="Hilbert H."/>
            <person name="Braun M."/>
            <person name="Holzer E."/>
            <person name="Brandt A."/>
            <person name="Peters S."/>
            <person name="van Staveren M."/>
            <person name="Dirkse W."/>
            <person name="Mooijman P."/>
            <person name="Klein Lankhorst R."/>
            <person name="Rose M."/>
            <person name="Hauf J."/>
            <person name="Koetter P."/>
            <person name="Berneiser S."/>
            <person name="Hempel S."/>
            <person name="Feldpausch M."/>
            <person name="Lamberth S."/>
            <person name="Van den Daele H."/>
            <person name="De Keyser A."/>
            <person name="Buysshaert C."/>
            <person name="Gielen J."/>
            <person name="Villarroel R."/>
            <person name="De Clercq R."/>
            <person name="van Montagu M."/>
            <person name="Rogers J."/>
            <person name="Cronin A."/>
            <person name="Quail M.A."/>
            <person name="Bray-Allen S."/>
            <person name="Clark L."/>
            <person name="Doggett J."/>
            <person name="Hall S."/>
            <person name="Kay M."/>
            <person name="Lennard N."/>
            <person name="McLay K."/>
            <person name="Mayes R."/>
            <person name="Pettett A."/>
            <person name="Rajandream M.A."/>
            <person name="Lyne M."/>
            <person name="Benes V."/>
            <person name="Rechmann S."/>
            <person name="Borkova D."/>
            <person name="Bloecker H."/>
            <person name="Scharfe M."/>
            <person name="Grimm M."/>
            <person name="Loehnert T.-H."/>
            <person name="Dose S."/>
            <person name="de Haan M."/>
            <person name="Maarse A.C."/>
            <person name="Schaefer M."/>
            <person name="Mueller-Auer S."/>
            <person name="Gabel C."/>
            <person name="Fuchs M."/>
            <person name="Fartmann B."/>
            <person name="Granderath K."/>
            <person name="Dauner D."/>
            <person name="Herzl A."/>
            <person name="Neumann S."/>
            <person name="Argiriou A."/>
            <person name="Vitale D."/>
            <person name="Liguori R."/>
            <person name="Piravandi E."/>
            <person name="Massenet O."/>
            <person name="Quigley F."/>
            <person name="Clabauld G."/>
            <person name="Muendlein A."/>
            <person name="Felber R."/>
            <person name="Schnabl S."/>
            <person name="Hiller R."/>
            <person name="Schmidt W."/>
            <person name="Lecharny A."/>
            <person name="Aubourg S."/>
            <person name="Chefdor F."/>
            <person name="Cooke R."/>
            <person name="Berger C."/>
            <person name="Monfort A."/>
            <person name="Casacuberta E."/>
            <person name="Gibbons T."/>
            <person name="Weber N."/>
            <person name="Vandenbol M."/>
            <person name="Bargues M."/>
            <person name="Terol J."/>
            <person name="Torres A."/>
            <person name="Perez-Perez A."/>
            <person name="Purnelle B."/>
            <person name="Bent E."/>
            <person name="Johnson S."/>
            <person name="Tacon D."/>
            <person name="Jesse T."/>
            <person name="Heijnen L."/>
            <person name="Schwarz S."/>
            <person name="Scholler P."/>
            <person name="Heber S."/>
            <person name="Francs P."/>
            <person name="Bielke C."/>
            <person name="Frishman D."/>
            <person name="Haase D."/>
            <person name="Lemcke K."/>
            <person name="Mewes H.-W."/>
            <person name="Stocker S."/>
            <person name="Zaccaria P."/>
            <person name="Bevan M."/>
            <person name="Wilson R.K."/>
            <person name="de la Bastide M."/>
            <person name="Habermann K."/>
            <person name="Parnell L."/>
            <person name="Dedhia N."/>
            <person name="Gnoj L."/>
            <person name="Schutz K."/>
            <person name="Huang E."/>
            <person name="Spiegel L."/>
            <person name="Sekhon M."/>
            <person name="Murray J."/>
            <person name="Sheet P."/>
            <person name="Cordes M."/>
            <person name="Abu-Threideh J."/>
            <person name="Stoneking T."/>
            <person name="Kalicki J."/>
            <person name="Graves T."/>
            <person name="Harmon G."/>
            <person name="Edwards J."/>
            <person name="Latreille P."/>
            <person name="Courtney L."/>
            <person name="Cloud J."/>
            <person name="Abbott A."/>
            <person name="Scott K."/>
            <person name="Johnson D."/>
            <person name="Minx P."/>
            <person name="Bentley D."/>
            <person name="Fulton B."/>
            <person name="Miller N."/>
            <person name="Greco T."/>
            <person name="Kemp K."/>
            <person name="Kramer J."/>
            <person name="Fulton L."/>
            <person name="Mardis E."/>
            <person name="Dante M."/>
            <person name="Pepin K."/>
            <person name="Hillier L.W."/>
            <person name="Nelson J."/>
            <person name="Spieth J."/>
            <person name="Ryan E."/>
            <person name="Andrews S."/>
            <person name="Geisel C."/>
            <person name="Layman D."/>
            <person name="Du H."/>
            <person name="Ali J."/>
            <person name="Berghoff A."/>
            <person name="Jones K."/>
            <person name="Drone K."/>
            <person name="Cotton M."/>
            <person name="Joshu C."/>
            <person name="Antonoiu B."/>
            <person name="Zidanic M."/>
            <person name="Strong C."/>
            <person name="Sun H."/>
            <person name="Lamar B."/>
            <person name="Yordan C."/>
            <person name="Ma P."/>
            <person name="Zhong J."/>
            <person name="Preston R."/>
            <person name="Vil D."/>
            <person name="Shekher M."/>
            <person name="Matero A."/>
            <person name="Shah R."/>
            <person name="Swaby I.K."/>
            <person name="O'Shaughnessy A."/>
            <person name="Rodriguez M."/>
            <person name="Hoffman J."/>
            <person name="Till S."/>
            <person name="Granat S."/>
            <person name="Shohdy N."/>
            <person name="Hasegawa A."/>
            <person name="Hameed A."/>
            <person name="Lodhi M."/>
            <person name="Johnson A."/>
            <person name="Chen E."/>
            <person name="Marra M.A."/>
            <person name="Martienssen R."/>
            <person name="McCombie W.R."/>
        </authorList>
    </citation>
    <scope>NUCLEOTIDE SEQUENCE [LARGE SCALE GENOMIC DNA] (AT4G31985)</scope>
    <source>
        <strain>cv. Columbia</strain>
    </source>
</reference>
<reference key="3">
    <citation type="journal article" date="2017" name="Plant J.">
        <title>Araport11: a complete reannotation of the Arabidopsis thaliana reference genome.</title>
        <authorList>
            <person name="Cheng C.Y."/>
            <person name="Krishnakumar V."/>
            <person name="Chan A.P."/>
            <person name="Thibaud-Nissen F."/>
            <person name="Schobel S."/>
            <person name="Town C.D."/>
        </authorList>
    </citation>
    <scope>GENOME REANNOTATION</scope>
    <source>
        <strain>cv. Columbia</strain>
    </source>
</reference>
<reference key="4">
    <citation type="journal article" date="2002" name="Science">
        <title>Functional annotation of a full-length Arabidopsis cDNA collection.</title>
        <authorList>
            <person name="Seki M."/>
            <person name="Narusaka M."/>
            <person name="Kamiya A."/>
            <person name="Ishida J."/>
            <person name="Satou M."/>
            <person name="Sakurai T."/>
            <person name="Nakajima M."/>
            <person name="Enju A."/>
            <person name="Akiyama K."/>
            <person name="Oono Y."/>
            <person name="Muramatsu M."/>
            <person name="Hayashizaki Y."/>
            <person name="Kawai J."/>
            <person name="Carninci P."/>
            <person name="Itoh M."/>
            <person name="Ishii Y."/>
            <person name="Arakawa T."/>
            <person name="Shibata K."/>
            <person name="Shinagawa A."/>
            <person name="Shinozaki K."/>
        </authorList>
    </citation>
    <scope>NUCLEOTIDE SEQUENCE [LARGE SCALE MRNA] (AT4G31985)</scope>
    <source>
        <strain>cv. Columbia</strain>
    </source>
</reference>
<reference key="5">
    <citation type="journal article" date="2003" name="Science">
        <title>Empirical analysis of transcriptional activity in the Arabidopsis genome.</title>
        <authorList>
            <person name="Yamada K."/>
            <person name="Lim J."/>
            <person name="Dale J.M."/>
            <person name="Chen H."/>
            <person name="Shinn P."/>
            <person name="Palm C.J."/>
            <person name="Southwick A.M."/>
            <person name="Wu H.C."/>
            <person name="Kim C.J."/>
            <person name="Nguyen M."/>
            <person name="Pham P.K."/>
            <person name="Cheuk R.F."/>
            <person name="Karlin-Newmann G."/>
            <person name="Liu S.X."/>
            <person name="Lam B."/>
            <person name="Sakano H."/>
            <person name="Wu T."/>
            <person name="Yu G."/>
            <person name="Miranda M."/>
            <person name="Quach H.L."/>
            <person name="Tripp M."/>
            <person name="Chang C.H."/>
            <person name="Lee J.M."/>
            <person name="Toriumi M.J."/>
            <person name="Chan M.M."/>
            <person name="Tang C.C."/>
            <person name="Onodera C.S."/>
            <person name="Deng J.M."/>
            <person name="Akiyama K."/>
            <person name="Ansari Y."/>
            <person name="Arakawa T."/>
            <person name="Banh J."/>
            <person name="Banno F."/>
            <person name="Bowser L."/>
            <person name="Brooks S.Y."/>
            <person name="Carninci P."/>
            <person name="Chao Q."/>
            <person name="Choy N."/>
            <person name="Enju A."/>
            <person name="Goldsmith A.D."/>
            <person name="Gurjal M."/>
            <person name="Hansen N.F."/>
            <person name="Hayashizaki Y."/>
            <person name="Johnson-Hopson C."/>
            <person name="Hsuan V.W."/>
            <person name="Iida K."/>
            <person name="Karnes M."/>
            <person name="Khan S."/>
            <person name="Koesema E."/>
            <person name="Ishida J."/>
            <person name="Jiang P.X."/>
            <person name="Jones T."/>
            <person name="Kawai J."/>
            <person name="Kamiya A."/>
            <person name="Meyers C."/>
            <person name="Nakajima M."/>
            <person name="Narusaka M."/>
            <person name="Seki M."/>
            <person name="Sakurai T."/>
            <person name="Satou M."/>
            <person name="Tamse R."/>
            <person name="Vaysberg M."/>
            <person name="Wallender E.K."/>
            <person name="Wong C."/>
            <person name="Yamamura Y."/>
            <person name="Yuan S."/>
            <person name="Shinozaki K."/>
            <person name="Davis R.W."/>
            <person name="Theologis A."/>
            <person name="Ecker J.R."/>
        </authorList>
    </citation>
    <scope>NUCLEOTIDE SEQUENCE [LARGE SCALE MRNA] (AT2G25210 AND AT4G31985)</scope>
    <source>
        <strain>cv. Columbia</strain>
    </source>
</reference>
<reference key="6">
    <citation type="journal article" date="2001" name="Plant Physiol.">
        <title>The organization of cytoplasmic ribosomal protein genes in the Arabidopsis genome.</title>
        <authorList>
            <person name="Barakat A."/>
            <person name="Szick-Miranda K."/>
            <person name="Chang I.-F."/>
            <person name="Guyot R."/>
            <person name="Blanc G."/>
            <person name="Cooke R."/>
            <person name="Delseny M."/>
            <person name="Bailey-Serres J."/>
        </authorList>
    </citation>
    <scope>GENE FAMILY ORGANIZATION</scope>
    <scope>NOMENCLATURE</scope>
</reference>
<reference key="7">
    <citation type="journal article" date="2023" name="Plant Cell">
        <title>An updated nomenclature for plant ribosomal protein genes.</title>
        <authorList>
            <person name="Scarpin M.R."/>
            <person name="Busche M."/>
            <person name="Martinez R.E."/>
            <person name="Harper L.C."/>
            <person name="Reiser L."/>
            <person name="Szakonyi D."/>
            <person name="Merchante C."/>
            <person name="Lan T."/>
            <person name="Xiong W."/>
            <person name="Mo B."/>
            <person name="Tang G."/>
            <person name="Chen X."/>
            <person name="Bailey-Serres J."/>
            <person name="Browning K.S."/>
            <person name="Brunkard J.O."/>
        </authorList>
    </citation>
    <scope>NOMENCLATURE</scope>
</reference>
<keyword id="KW-1185">Reference proteome</keyword>
<keyword id="KW-0687">Ribonucleoprotein</keyword>
<keyword id="KW-0689">Ribosomal protein</keyword>
<gene>
    <name type="primary">RPL39A</name>
    <name type="ordered locus">At2g25210</name>
    <name type="ORF">T22F11.20</name>
</gene>
<gene>
    <name type="primary">RPL39C</name>
    <name type="ordered locus">At4g31985</name>
    <name type="ORF">F10N7.2</name>
    <name type="ORF">F11C18.17</name>
</gene>
<name>RL391_ARATH</name>
<proteinExistence type="inferred from homology"/>
<comment type="similarity">
    <text evidence="3">Belongs to the eukaryotic ribosomal protein eL39 family.</text>
</comment>
<comment type="sequence caution" evidence="3">
    <conflict type="erroneous gene model prediction">
        <sequence resource="EMBL-CDS" id="AAD23670"/>
    </conflict>
</comment>
<comment type="sequence caution" evidence="3">
    <conflict type="erroneous initiation">
        <sequence resource="EMBL-CDS" id="AEC07671"/>
    </conflict>
    <text>Truncated N-terminus.</text>
</comment>
<dbReference type="EMBL" id="AC007070">
    <property type="protein sequence ID" value="AAD23670.1"/>
    <property type="status" value="ALT_SEQ"/>
    <property type="molecule type" value="Genomic_DNA"/>
</dbReference>
<dbReference type="EMBL" id="AL021636">
    <property type="status" value="NOT_ANNOTATED_CDS"/>
    <property type="molecule type" value="Genomic_DNA"/>
</dbReference>
<dbReference type="EMBL" id="AL049607">
    <property type="status" value="NOT_ANNOTATED_CDS"/>
    <property type="molecule type" value="Genomic_DNA"/>
</dbReference>
<dbReference type="EMBL" id="CP002685">
    <property type="protein sequence ID" value="AEC07671.1"/>
    <property type="status" value="ALT_INIT"/>
    <property type="molecule type" value="Genomic_DNA"/>
</dbReference>
<dbReference type="EMBL" id="CP002687">
    <property type="protein sequence ID" value="AEE85986.1"/>
    <property type="molecule type" value="Genomic_DNA"/>
</dbReference>
<dbReference type="EMBL" id="AK118235">
    <property type="protein sequence ID" value="BAC42854.1"/>
    <property type="molecule type" value="mRNA"/>
</dbReference>
<dbReference type="EMBL" id="AF372908">
    <property type="protein sequence ID" value="AAK49624.1"/>
    <property type="molecule type" value="mRNA"/>
</dbReference>
<dbReference type="EMBL" id="AY057730">
    <property type="protein sequence ID" value="AAL15360.1"/>
    <property type="molecule type" value="mRNA"/>
</dbReference>
<dbReference type="EMBL" id="BT010475">
    <property type="protein sequence ID" value="AAQ65098.1"/>
    <property type="molecule type" value="mRNA"/>
</dbReference>
<dbReference type="PIR" id="F84645">
    <property type="entry name" value="F84645"/>
</dbReference>
<dbReference type="RefSeq" id="NP_180093.1">
    <property type="nucleotide sequence ID" value="NM_128078.2"/>
</dbReference>
<dbReference type="RefSeq" id="NP_567886.1">
    <property type="nucleotide sequence ID" value="NM_119350.3"/>
</dbReference>
<dbReference type="SMR" id="P51424"/>
<dbReference type="BioGRID" id="14615">
    <property type="interactions" value="3"/>
</dbReference>
<dbReference type="BioGRID" id="2411">
    <property type="interactions" value="2"/>
</dbReference>
<dbReference type="FunCoup" id="P51424">
    <property type="interactions" value="2142"/>
</dbReference>
<dbReference type="IntAct" id="P51424">
    <property type="interactions" value="2"/>
</dbReference>
<dbReference type="STRING" id="3702.P51424"/>
<dbReference type="PaxDb" id="3702-AT4G31985.1"/>
<dbReference type="ProteomicsDB" id="226843"/>
<dbReference type="EnsemblPlants" id="AT4G31985.1">
    <property type="protein sequence ID" value="AT4G31985.1"/>
    <property type="gene ID" value="AT4G31985"/>
</dbReference>
<dbReference type="GeneID" id="817059"/>
<dbReference type="GeneID" id="829329"/>
<dbReference type="Gramene" id="AT4G31985.1">
    <property type="protein sequence ID" value="AT4G31985.1"/>
    <property type="gene ID" value="AT4G31985"/>
</dbReference>
<dbReference type="KEGG" id="ath:AT2G25210"/>
<dbReference type="KEGG" id="ath:AT4G31985"/>
<dbReference type="Araport" id="AT2G25210"/>
<dbReference type="Araport" id="AT4G31985"/>
<dbReference type="TAIR" id="AT2G25210"/>
<dbReference type="TAIR" id="AT4G31985"/>
<dbReference type="eggNOG" id="KOG0002">
    <property type="taxonomic scope" value="Eukaryota"/>
</dbReference>
<dbReference type="HOGENOM" id="CLU_181948_3_0_1"/>
<dbReference type="InParanoid" id="P51424"/>
<dbReference type="OMA" id="RRTKMNI"/>
<dbReference type="OrthoDB" id="1378449at2759"/>
<dbReference type="PhylomeDB" id="P51424"/>
<dbReference type="PRO" id="PR:P51424"/>
<dbReference type="Proteomes" id="UP000006548">
    <property type="component" value="Chromosome 2"/>
</dbReference>
<dbReference type="Proteomes" id="UP000006548">
    <property type="component" value="Chromosome 4"/>
</dbReference>
<dbReference type="ExpressionAtlas" id="P51424">
    <property type="expression patterns" value="baseline and differential"/>
</dbReference>
<dbReference type="GO" id="GO:0022625">
    <property type="term" value="C:cytosolic large ribosomal subunit"/>
    <property type="evidence" value="ECO:0007005"/>
    <property type="project" value="TAIR"/>
</dbReference>
<dbReference type="GO" id="GO:0005886">
    <property type="term" value="C:plasma membrane"/>
    <property type="evidence" value="ECO:0007005"/>
    <property type="project" value="TAIR"/>
</dbReference>
<dbReference type="GO" id="GO:0005773">
    <property type="term" value="C:vacuole"/>
    <property type="evidence" value="ECO:0007005"/>
    <property type="project" value="TAIR"/>
</dbReference>
<dbReference type="GO" id="GO:0003729">
    <property type="term" value="F:mRNA binding"/>
    <property type="evidence" value="ECO:0000314"/>
    <property type="project" value="TAIR"/>
</dbReference>
<dbReference type="GO" id="GO:0003735">
    <property type="term" value="F:structural constituent of ribosome"/>
    <property type="evidence" value="ECO:0000314"/>
    <property type="project" value="CAFA"/>
</dbReference>
<dbReference type="GO" id="GO:0006412">
    <property type="term" value="P:translation"/>
    <property type="evidence" value="ECO:0007669"/>
    <property type="project" value="InterPro"/>
</dbReference>
<dbReference type="FunFam" id="1.10.1620.10:FF:000001">
    <property type="entry name" value="60S ribosomal protein-like L39"/>
    <property type="match status" value="1"/>
</dbReference>
<dbReference type="Gene3D" id="1.10.1620.10">
    <property type="entry name" value="Ribosomal protein L39e"/>
    <property type="match status" value="1"/>
</dbReference>
<dbReference type="HAMAP" id="MF_00629">
    <property type="entry name" value="Ribosomal_eL39"/>
    <property type="match status" value="1"/>
</dbReference>
<dbReference type="InterPro" id="IPR000077">
    <property type="entry name" value="Ribosomal_eL39"/>
</dbReference>
<dbReference type="InterPro" id="IPR020083">
    <property type="entry name" value="Ribosomal_eL39_CS"/>
</dbReference>
<dbReference type="InterPro" id="IPR023626">
    <property type="entry name" value="Ribosomal_eL39_dom_sf"/>
</dbReference>
<dbReference type="PANTHER" id="PTHR19970:SF0">
    <property type="entry name" value="LARGE RIBOSOMAL SUBUNIT PROTEIN EL39"/>
    <property type="match status" value="1"/>
</dbReference>
<dbReference type="PANTHER" id="PTHR19970">
    <property type="entry name" value="RIBOSOMAL PROTEIN L39E"/>
    <property type="match status" value="1"/>
</dbReference>
<dbReference type="Pfam" id="PF00832">
    <property type="entry name" value="Ribosomal_L39"/>
    <property type="match status" value="1"/>
</dbReference>
<dbReference type="SUPFAM" id="SSF48662">
    <property type="entry name" value="Ribosomal protein L39e"/>
    <property type="match status" value="1"/>
</dbReference>
<dbReference type="PROSITE" id="PS00051">
    <property type="entry name" value="RIBOSOMAL_L39E"/>
    <property type="match status" value="1"/>
</dbReference>
<evidence type="ECO:0000256" key="1">
    <source>
        <dbReference type="SAM" id="MobiDB-lite"/>
    </source>
</evidence>
<evidence type="ECO:0000303" key="2">
    <source>
    </source>
</evidence>
<evidence type="ECO:0000305" key="3"/>
<accession>P51424</accession>
<accession>A0NAA9</accession>
<accession>A2P2R6</accession>
<accession>Q541X1</accession>
<accession>Q93VI7</accession>
<accession>Q9SIS1</accession>
<protein>
    <recommendedName>
        <fullName evidence="2">Large ribosomal subunit protein eL39z/eL39x</fullName>
    </recommendedName>
    <alternativeName>
        <fullName>60S ribosomal protein L39-1</fullName>
    </alternativeName>
</protein>
<sequence length="51" mass="6416">MPSHKSFMIKKKLGKKMRQNRPIPHWIRLRTDNTIRYNAKRRHWRRTKLGF</sequence>